<feature type="signal peptide" evidence="1">
    <location>
        <begin position="1"/>
        <end position="25"/>
    </location>
</feature>
<feature type="chain" id="PRO_0000036106" description="CD59 glycoprotein">
    <location>
        <begin position="26"/>
        <end position="102"/>
    </location>
</feature>
<feature type="propeptide" id="PRO_0000036107" description="Removed in mature form" evidence="1">
    <location>
        <begin position="103"/>
        <end position="128"/>
    </location>
</feature>
<feature type="domain" description="UPAR/Ly6">
    <location>
        <begin position="26"/>
        <end position="108"/>
    </location>
</feature>
<feature type="lipid moiety-binding region" description="GPI-anchor amidated asparagine" evidence="1">
    <location>
        <position position="102"/>
    </location>
</feature>
<feature type="glycosylation site" description="N-linked (GlcNAc...) asparagine" evidence="2">
    <location>
        <position position="43"/>
    </location>
</feature>
<feature type="disulfide bond" evidence="1">
    <location>
        <begin position="28"/>
        <end position="51"/>
    </location>
</feature>
<feature type="disulfide bond" evidence="1">
    <location>
        <begin position="31"/>
        <end position="38"/>
    </location>
</feature>
<feature type="disulfide bond" evidence="1">
    <location>
        <begin position="44"/>
        <end position="64"/>
    </location>
</feature>
<feature type="disulfide bond" evidence="1">
    <location>
        <begin position="70"/>
        <end position="88"/>
    </location>
</feature>
<feature type="disulfide bond" evidence="1">
    <location>
        <begin position="89"/>
        <end position="94"/>
    </location>
</feature>
<keyword id="KW-1003">Cell membrane</keyword>
<keyword id="KW-1015">Disulfide bond</keyword>
<keyword id="KW-0325">Glycoprotein</keyword>
<keyword id="KW-0336">GPI-anchor</keyword>
<keyword id="KW-0449">Lipoprotein</keyword>
<keyword id="KW-0472">Membrane</keyword>
<keyword id="KW-0964">Secreted</keyword>
<keyword id="KW-0732">Signal</keyword>
<proteinExistence type="inferred from homology"/>
<sequence>MGIQGGSVLFGLLLVLAVFCHSGHSLQCYNCPNPTTDCKTAINCSSGFDTCLIARAGLQVYNQCWKFANCNFNDISTLLKESELQYFCCKKDLCNFNEQLENGGTSLSEKTVVLLVTLLLAAAWCLHP</sequence>
<organism>
    <name type="scientific">Chlorocebus aethiops</name>
    <name type="common">Green monkey</name>
    <name type="synonym">Cercopithecus aethiops</name>
    <dbReference type="NCBI Taxonomy" id="9534"/>
    <lineage>
        <taxon>Eukaryota</taxon>
        <taxon>Metazoa</taxon>
        <taxon>Chordata</taxon>
        <taxon>Craniata</taxon>
        <taxon>Vertebrata</taxon>
        <taxon>Euteleostomi</taxon>
        <taxon>Mammalia</taxon>
        <taxon>Eutheria</taxon>
        <taxon>Euarchontoglires</taxon>
        <taxon>Primates</taxon>
        <taxon>Haplorrhini</taxon>
        <taxon>Catarrhini</taxon>
        <taxon>Cercopithecidae</taxon>
        <taxon>Cercopithecinae</taxon>
        <taxon>Chlorocebus</taxon>
    </lineage>
</organism>
<comment type="function">
    <text evidence="1">Potent inhibitor of the complement membrane attack complex (MAC) action, which protects self-cells from damage during complement activation. Acts by binding to the beta-haipins of C8 (C8A and C8B) components of the assembling MAC, forming an intermolecular beta-sheet that prevents incorporation of the multiple copies of C9 required for complete formation of the osmolytic pore.</text>
</comment>
<comment type="subunit">
    <text evidence="1">Interacts with T-cell surface antigen CD2.</text>
</comment>
<comment type="subcellular location">
    <subcellularLocation>
        <location evidence="1">Cell membrane</location>
        <topology evidence="1">Lipid-anchor</topology>
        <topology evidence="1">GPI-anchor</topology>
    </subcellularLocation>
    <subcellularLocation>
        <location evidence="1">Secreted</location>
    </subcellularLocation>
    <text evidence="1">Localizes to the cell surface. Soluble form found in a number of tissues.</text>
</comment>
<comment type="PTM">
    <text evidence="1">N- and O-glycosylated.</text>
</comment>
<gene>
    <name evidence="3" type="primary">CD59</name>
</gene>
<dbReference type="EMBL" id="L22863">
    <property type="protein sequence ID" value="AAA74126.1"/>
    <property type="molecule type" value="Genomic_DNA"/>
</dbReference>
<dbReference type="PIR" id="I36894">
    <property type="entry name" value="I36894"/>
</dbReference>
<dbReference type="SMR" id="Q28216"/>
<dbReference type="GlyCosmos" id="Q28216">
    <property type="glycosylation" value="1 site, No reported glycans"/>
</dbReference>
<dbReference type="GO" id="GO:0005886">
    <property type="term" value="C:plasma membrane"/>
    <property type="evidence" value="ECO:0007669"/>
    <property type="project" value="UniProtKB-SubCell"/>
</dbReference>
<dbReference type="GO" id="GO:0098552">
    <property type="term" value="C:side of membrane"/>
    <property type="evidence" value="ECO:0007669"/>
    <property type="project" value="UniProtKB-KW"/>
</dbReference>
<dbReference type="GO" id="GO:0001848">
    <property type="term" value="F:complement binding"/>
    <property type="evidence" value="ECO:0007669"/>
    <property type="project" value="TreeGrafter"/>
</dbReference>
<dbReference type="GO" id="GO:0001971">
    <property type="term" value="P:negative regulation of activation of membrane attack complex"/>
    <property type="evidence" value="ECO:0007669"/>
    <property type="project" value="TreeGrafter"/>
</dbReference>
<dbReference type="CDD" id="cd23554">
    <property type="entry name" value="TFP_LU_ECD_CD59"/>
    <property type="match status" value="1"/>
</dbReference>
<dbReference type="FunFam" id="2.10.60.10:FF:000023">
    <property type="entry name" value="CD59 glycoprotein preproprotein"/>
    <property type="match status" value="1"/>
</dbReference>
<dbReference type="Gene3D" id="2.10.60.10">
    <property type="entry name" value="CD59"/>
    <property type="match status" value="1"/>
</dbReference>
<dbReference type="InterPro" id="IPR056949">
    <property type="entry name" value="CD59"/>
</dbReference>
<dbReference type="InterPro" id="IPR018363">
    <property type="entry name" value="CD59_antigen_CS"/>
</dbReference>
<dbReference type="InterPro" id="IPR016054">
    <property type="entry name" value="LY6_UPA_recep-like"/>
</dbReference>
<dbReference type="InterPro" id="IPR045860">
    <property type="entry name" value="Snake_toxin-like_sf"/>
</dbReference>
<dbReference type="PANTHER" id="PTHR10036">
    <property type="entry name" value="CD59 GLYCOPROTEIN"/>
    <property type="match status" value="1"/>
</dbReference>
<dbReference type="PANTHER" id="PTHR10036:SF24">
    <property type="entry name" value="CD59 GLYCOPROTEIN"/>
    <property type="match status" value="1"/>
</dbReference>
<dbReference type="Pfam" id="PF25152">
    <property type="entry name" value="CD59"/>
    <property type="match status" value="1"/>
</dbReference>
<dbReference type="SMART" id="SM00134">
    <property type="entry name" value="LU"/>
    <property type="match status" value="1"/>
</dbReference>
<dbReference type="SUPFAM" id="SSF57302">
    <property type="entry name" value="Snake toxin-like"/>
    <property type="match status" value="1"/>
</dbReference>
<dbReference type="PROSITE" id="PS00983">
    <property type="entry name" value="LY6_UPAR"/>
    <property type="match status" value="1"/>
</dbReference>
<evidence type="ECO:0000250" key="1">
    <source>
        <dbReference type="UniProtKB" id="P13987"/>
    </source>
</evidence>
<evidence type="ECO:0000255" key="2"/>
<evidence type="ECO:0000303" key="3">
    <source>
    </source>
</evidence>
<name>CD59_CHLAE</name>
<reference key="1">
    <citation type="journal article" date="1995" name="Immunogenetics">
        <title>Primate terminal complement inhibitor homologues of human CD59.</title>
        <authorList>
            <person name="Fodor W.L."/>
            <person name="Rollins S.A."/>
            <person name="Bianco-Caron S."/>
            <person name="Burton W.V."/>
            <person name="Guilmette E.R."/>
            <person name="Rother R.P."/>
            <person name="Zavoico G.B."/>
            <person name="Squinto S.P."/>
        </authorList>
    </citation>
    <scope>NUCLEOTIDE SEQUENCE [GENOMIC DNA]</scope>
</reference>
<accession>Q28216</accession>
<protein>
    <recommendedName>
        <fullName>CD59 glycoprotein</fullName>
    </recommendedName>
    <alternativeName>
        <fullName>MAC-inhibitory protein</fullName>
        <shortName>MAC-IP</shortName>
    </alternativeName>
    <alternativeName>
        <fullName>Membrane attack complex inhibition factor</fullName>
        <shortName>MACIF</shortName>
    </alternativeName>
    <alternativeName>
        <fullName>Protectin</fullName>
    </alternativeName>
    <cdAntigenName>CD59</cdAntigenName>
</protein>